<name>SLRP_SALT1</name>
<sequence>MFNITNIQSTARHQSISNEASTEVPLKEEIWNKISAFFSSEHQVEAQNCIAYLCHPPETASPEEIKSKFECLRMLAFPAYADNIQYSRGGADQYCILSENSQEILSIVFNTEGYTVEGGGKSVTYTRVTESEQASSASGSKDAVNYELIWSEWVKEAPAKEAANREEAVQRMRDCLKNNKTELRLKILGLTTIPAYIPEQITTLILDNNELKSLPENLQGNIKTLYANSNQLTSIPATLPDTIQEMELSINRITELPERLPSALQSLDLFHNKISCLPENLPEELRYLSVYDNSIRTLPAHLPSEITHLNVQSNSLTALPETLPPGLKTLEAGENALTSLPASLPPELQVLDVSKNQITVLPETLPPTITTLDVSRNALTNLPENLPAALQIMQASRNNLVRLPESLPHFRGEGPQPTRIIVEYNPFSERTIQNMQRLMSSVDYQGPRVLFAMGDFSIVRVTRPLHQAVQGWLTSLEEEDVNQWRAFEAEANAAAFSGFLDYLGDTQNTRHPDFKEQVSAWLMRLAEDSALRETVFIIAMNATISCEDRVTLAYHQMQEATLVHDAERGAFDSHLAELIMAGREIFRLEQIESLAREKVKRLFFIDEVEVFLGFQNQLRESLSLTTMTRDMRFYNVSGITESDLDEAEIRIKMAENRDFHKWFALWGPWHKVLERIAPEEWREMMAKRDECIETDEYQSRVNAELEDLRIADDSDAERTTEVQMDAERAIGIKIMEEINQTLFTEIMENILLKKEVSSLMSAYWR</sequence>
<reference key="1">
    <citation type="journal article" date="2010" name="J. Bacteriol.">
        <title>Short-term signatures of evolutionary change in the Salmonella enterica serovar typhimurium 14028 genome.</title>
        <authorList>
            <person name="Jarvik T."/>
            <person name="Smillie C."/>
            <person name="Groisman E.A."/>
            <person name="Ochman H."/>
        </authorList>
    </citation>
    <scope>NUCLEOTIDE SEQUENCE [LARGE SCALE GENOMIC DNA]</scope>
    <source>
        <strain>14028s / SGSC 2262</strain>
    </source>
</reference>
<reference key="2">
    <citation type="journal article" date="2000" name="Proc. Natl. Acad. Sci. U.S.A.">
        <title>A conserved amino acid sequence directing intracellular type III secretion by Salmonella typhimurium.</title>
        <authorList>
            <person name="Miao E.A."/>
            <person name="Miller S.I."/>
        </authorList>
    </citation>
    <scope>SUBCELLULAR LOCATION</scope>
    <scope>SECRETION VIA TYPE III SECRETION SYSTEM</scope>
</reference>
<reference key="3">
    <citation type="journal article" date="2003" name="Infect. Immun.">
        <title>A Salmonella enterica serovar typhimurium translocated leucine-rich repeat effector protein inhibits NF-kappa B-dependent gene expression.</title>
        <authorList>
            <person name="Haraga A."/>
            <person name="Miller S.I."/>
        </authorList>
    </citation>
    <scope>SUBCELLULAR LOCATION</scope>
</reference>
<protein>
    <recommendedName>
        <fullName>E3 ubiquitin-protein ligase SlrP</fullName>
        <ecNumber>2.3.2.27</ecNumber>
    </recommendedName>
    <alternativeName>
        <fullName evidence="3">RING-type E3 ubiquitin transferase SlrP</fullName>
    </alternativeName>
    <alternativeName>
        <fullName>Secreted effector protein SlrP</fullName>
    </alternativeName>
</protein>
<accession>D0ZRB2</accession>
<feature type="chain" id="PRO_0000391756" description="E3 ubiquitin-protein ligase SlrP">
    <location>
        <begin position="1"/>
        <end position="765"/>
    </location>
</feature>
<feature type="repeat" description="LRR 1">
    <location>
        <begin position="200"/>
        <end position="219"/>
    </location>
</feature>
<feature type="repeat" description="LRR 2">
    <location>
        <begin position="221"/>
        <end position="242"/>
    </location>
</feature>
<feature type="repeat" description="LRR 3">
    <location>
        <begin position="243"/>
        <end position="262"/>
    </location>
</feature>
<feature type="repeat" description="LRR 4">
    <location>
        <begin position="263"/>
        <end position="284"/>
    </location>
</feature>
<feature type="repeat" description="LRR 5">
    <location>
        <begin position="285"/>
        <end position="305"/>
    </location>
</feature>
<feature type="repeat" description="LRR 6">
    <location>
        <begin position="306"/>
        <end position="325"/>
    </location>
</feature>
<feature type="repeat" description="LRR 7">
    <location>
        <begin position="326"/>
        <end position="346"/>
    </location>
</feature>
<feature type="repeat" description="LRR 8">
    <location>
        <begin position="347"/>
        <end position="368"/>
    </location>
</feature>
<feature type="repeat" description="LRR 9">
    <location>
        <begin position="369"/>
        <end position="389"/>
    </location>
</feature>
<feature type="repeat" description="LRR 10">
    <location>
        <begin position="390"/>
        <end position="410"/>
    </location>
</feature>
<feature type="domain" description="NEL" evidence="2">
    <location>
        <begin position="464"/>
        <end position="758"/>
    </location>
</feature>
<feature type="region of interest" description="Interaction with target proteins" evidence="1">
    <location>
        <begin position="1"/>
        <end position="453"/>
    </location>
</feature>
<feature type="region of interest" description="Linker" evidence="1">
    <location>
        <begin position="454"/>
        <end position="461"/>
    </location>
</feature>
<feature type="region of interest" description="E3 ubiquitin-protein ligase catalytic domain" evidence="1">
    <location>
        <begin position="462"/>
        <end position="765"/>
    </location>
</feature>
<feature type="active site" description="Glycyl thioester intermediate" evidence="2">
    <location>
        <position position="546"/>
    </location>
</feature>
<feature type="helix" evidence="4">
    <location>
        <begin position="148"/>
        <end position="153"/>
    </location>
</feature>
<feature type="helix" evidence="4">
    <location>
        <begin position="154"/>
        <end position="156"/>
    </location>
</feature>
<feature type="helix" evidence="4">
    <location>
        <begin position="163"/>
        <end position="165"/>
    </location>
</feature>
<feature type="helix" evidence="4">
    <location>
        <begin position="166"/>
        <end position="177"/>
    </location>
</feature>
<feature type="strand" evidence="4">
    <location>
        <begin position="181"/>
        <end position="188"/>
    </location>
</feature>
<feature type="strand" evidence="4">
    <location>
        <begin position="203"/>
        <end position="209"/>
    </location>
</feature>
<feature type="strand" evidence="4">
    <location>
        <begin position="223"/>
        <end position="230"/>
    </location>
</feature>
<feature type="strand" evidence="4">
    <location>
        <begin position="245"/>
        <end position="247"/>
    </location>
</feature>
<feature type="strand" evidence="4">
    <location>
        <begin position="266"/>
        <end position="268"/>
    </location>
</feature>
<feature type="strand" evidence="4">
    <location>
        <begin position="287"/>
        <end position="289"/>
    </location>
</feature>
<feature type="strand" evidence="4">
    <location>
        <begin position="307"/>
        <end position="310"/>
    </location>
</feature>
<feature type="strand" evidence="4">
    <location>
        <begin position="329"/>
        <end position="331"/>
    </location>
</feature>
<feature type="strand" evidence="4">
    <location>
        <begin position="350"/>
        <end position="352"/>
    </location>
</feature>
<feature type="strand" evidence="4">
    <location>
        <begin position="371"/>
        <end position="373"/>
    </location>
</feature>
<feature type="strand" evidence="4">
    <location>
        <begin position="392"/>
        <end position="394"/>
    </location>
</feature>
<feature type="strand" evidence="4">
    <location>
        <begin position="414"/>
        <end position="416"/>
    </location>
</feature>
<feature type="strand" evidence="4">
    <location>
        <begin position="419"/>
        <end position="421"/>
    </location>
</feature>
<feature type="helix" evidence="4">
    <location>
        <begin position="429"/>
        <end position="440"/>
    </location>
</feature>
<feature type="strand" evidence="4">
    <location>
        <begin position="448"/>
        <end position="455"/>
    </location>
</feature>
<feature type="helix" evidence="4">
    <location>
        <begin position="465"/>
        <end position="468"/>
    </location>
</feature>
<feature type="turn" evidence="4">
    <location>
        <begin position="470"/>
        <end position="472"/>
    </location>
</feature>
<feature type="helix" evidence="4">
    <location>
        <begin position="478"/>
        <end position="489"/>
    </location>
</feature>
<feature type="helix" evidence="4">
    <location>
        <begin position="493"/>
        <end position="503"/>
    </location>
</feature>
<feature type="strand" evidence="4">
    <location>
        <begin position="504"/>
        <end position="507"/>
    </location>
</feature>
<feature type="helix" evidence="4">
    <location>
        <begin position="508"/>
        <end position="510"/>
    </location>
</feature>
<feature type="helix" evidence="4">
    <location>
        <begin position="512"/>
        <end position="527"/>
    </location>
</feature>
<feature type="helix" evidence="4">
    <location>
        <begin position="529"/>
        <end position="544"/>
    </location>
</feature>
<feature type="strand" evidence="4">
    <location>
        <begin position="545"/>
        <end position="547"/>
    </location>
</feature>
<feature type="helix" evidence="4">
    <location>
        <begin position="550"/>
        <end position="568"/>
    </location>
</feature>
<feature type="helix" evidence="4">
    <location>
        <begin position="575"/>
        <end position="599"/>
    </location>
</feature>
<feature type="strand" evidence="4">
    <location>
        <begin position="603"/>
        <end position="605"/>
    </location>
</feature>
<feature type="helix" evidence="4">
    <location>
        <begin position="607"/>
        <end position="617"/>
    </location>
</feature>
<feature type="turn" evidence="4">
    <location>
        <begin position="618"/>
        <end position="623"/>
    </location>
</feature>
<feature type="helix" evidence="4">
    <location>
        <begin position="641"/>
        <end position="655"/>
    </location>
</feature>
<feature type="helix" evidence="4">
    <location>
        <begin position="659"/>
        <end position="665"/>
    </location>
</feature>
<feature type="helix" evidence="4">
    <location>
        <begin position="668"/>
        <end position="676"/>
    </location>
</feature>
<feature type="helix" evidence="4">
    <location>
        <begin position="678"/>
        <end position="688"/>
    </location>
</feature>
<feature type="strand" evidence="4">
    <location>
        <begin position="692"/>
        <end position="694"/>
    </location>
</feature>
<feature type="helix" evidence="4">
    <location>
        <begin position="697"/>
        <end position="708"/>
    </location>
</feature>
<feature type="helix" evidence="4">
    <location>
        <begin position="731"/>
        <end position="753"/>
    </location>
</feature>
<feature type="helix" evidence="4">
    <location>
        <begin position="755"/>
        <end position="758"/>
    </location>
</feature>
<gene>
    <name type="primary">slrP</name>
    <name type="ordered locus">STM14_928</name>
</gene>
<proteinExistence type="evidence at protein level"/>
<dbReference type="EC" id="2.3.2.27"/>
<dbReference type="EMBL" id="CP001363">
    <property type="protein sequence ID" value="ACY87425.1"/>
    <property type="molecule type" value="Genomic_DNA"/>
</dbReference>
<dbReference type="RefSeq" id="WP_000481997.1">
    <property type="nucleotide sequence ID" value="NZ_CP043402.1"/>
</dbReference>
<dbReference type="PDB" id="4PUF">
    <property type="method" value="X-ray"/>
    <property type="resolution" value="3.30 A"/>
    <property type="chains" value="A/B=141-765"/>
</dbReference>
<dbReference type="PDBsum" id="4PUF"/>
<dbReference type="SMR" id="D0ZRB2"/>
<dbReference type="IntAct" id="D0ZRB2">
    <property type="interactions" value="31"/>
</dbReference>
<dbReference type="MINT" id="D0ZRB2"/>
<dbReference type="KEGG" id="seo:STM14_928"/>
<dbReference type="PATRIC" id="fig|588858.6.peg.962"/>
<dbReference type="HOGENOM" id="CLU_018533_1_0_6"/>
<dbReference type="BioCyc" id="SENT588858:STM14_RS04625-MONOMER"/>
<dbReference type="EvolutionaryTrace" id="D0ZRB2"/>
<dbReference type="PHI-base" id="PHI:3743"/>
<dbReference type="Proteomes" id="UP000002695">
    <property type="component" value="Chromosome"/>
</dbReference>
<dbReference type="GO" id="GO:0005576">
    <property type="term" value="C:extracellular region"/>
    <property type="evidence" value="ECO:0007669"/>
    <property type="project" value="UniProtKB-SubCell"/>
</dbReference>
<dbReference type="GO" id="GO:0030430">
    <property type="term" value="C:host cell cytoplasm"/>
    <property type="evidence" value="ECO:0007669"/>
    <property type="project" value="UniProtKB-SubCell"/>
</dbReference>
<dbReference type="GO" id="GO:0061630">
    <property type="term" value="F:ubiquitin protein ligase activity"/>
    <property type="evidence" value="ECO:0000314"/>
    <property type="project" value="AgBase"/>
</dbReference>
<dbReference type="GO" id="GO:0004842">
    <property type="term" value="F:ubiquitin-protein transferase activity"/>
    <property type="evidence" value="ECO:0000250"/>
    <property type="project" value="UniProtKB"/>
</dbReference>
<dbReference type="GO" id="GO:0031640">
    <property type="term" value="P:killing of cells of another organism"/>
    <property type="evidence" value="ECO:0000315"/>
    <property type="project" value="AgBase"/>
</dbReference>
<dbReference type="GO" id="GO:0030254">
    <property type="term" value="P:protein secretion by the type III secretion system"/>
    <property type="evidence" value="ECO:0000314"/>
    <property type="project" value="UniProtKB"/>
</dbReference>
<dbReference type="GO" id="GO:0016567">
    <property type="term" value="P:protein ubiquitination"/>
    <property type="evidence" value="ECO:0000314"/>
    <property type="project" value="AgBase"/>
</dbReference>
<dbReference type="FunFam" id="1.20.58.360:FF:000001">
    <property type="entry name" value="Probable E3 ubiquitin-protein ligase ipaH7.8"/>
    <property type="match status" value="1"/>
</dbReference>
<dbReference type="FunFam" id="1.20.1270.130:FF:000003">
    <property type="entry name" value="Type III secretion system effector E3 ubiquitin transferase SlrP"/>
    <property type="match status" value="1"/>
</dbReference>
<dbReference type="Gene3D" id="1.20.58.90">
    <property type="match status" value="1"/>
</dbReference>
<dbReference type="Gene3D" id="3.80.10.10">
    <property type="entry name" value="Ribonuclease Inhibitor"/>
    <property type="match status" value="1"/>
</dbReference>
<dbReference type="Gene3D" id="3.30.2440.10">
    <property type="entry name" value="Secreted effector protein SifA"/>
    <property type="match status" value="1"/>
</dbReference>
<dbReference type="Gene3D" id="1.20.58.360">
    <property type="entry name" value="Shigella T3SS effector IpaH defines"/>
    <property type="match status" value="1"/>
</dbReference>
<dbReference type="Gene3D" id="1.20.1270.130">
    <property type="entry name" value="Shigella T3SS effector IpaH domain"/>
    <property type="match status" value="1"/>
</dbReference>
<dbReference type="InterPro" id="IPR001611">
    <property type="entry name" value="Leu-rich_rpt"/>
</dbReference>
<dbReference type="InterPro" id="IPR003591">
    <property type="entry name" value="Leu-rich_rpt_typical-subtyp"/>
</dbReference>
<dbReference type="InterPro" id="IPR051071">
    <property type="entry name" value="LRR-bact_E3_ubiq_ligases"/>
</dbReference>
<dbReference type="InterPro" id="IPR032675">
    <property type="entry name" value="LRR_dom_sf"/>
</dbReference>
<dbReference type="InterPro" id="IPR032674">
    <property type="entry name" value="LRR_E3_ligase_N"/>
</dbReference>
<dbReference type="InterPro" id="IPR029487">
    <property type="entry name" value="NEL_dom"/>
</dbReference>
<dbReference type="NCBIfam" id="NF011897">
    <property type="entry name" value="PRK15370.1"/>
    <property type="match status" value="1"/>
</dbReference>
<dbReference type="PANTHER" id="PTHR47114">
    <property type="match status" value="1"/>
</dbReference>
<dbReference type="PANTHER" id="PTHR47114:SF2">
    <property type="entry name" value="OLIGODENDROCYTE-MYELIN GLYCOPROTEIN"/>
    <property type="match status" value="1"/>
</dbReference>
<dbReference type="Pfam" id="PF12468">
    <property type="entry name" value="LRR_TTSS"/>
    <property type="match status" value="1"/>
</dbReference>
<dbReference type="Pfam" id="PF14496">
    <property type="entry name" value="NEL"/>
    <property type="match status" value="1"/>
</dbReference>
<dbReference type="SMART" id="SM00364">
    <property type="entry name" value="LRR_BAC"/>
    <property type="match status" value="10"/>
</dbReference>
<dbReference type="SMART" id="SM00369">
    <property type="entry name" value="LRR_TYP"/>
    <property type="match status" value="5"/>
</dbReference>
<dbReference type="SUPFAM" id="SSF52058">
    <property type="entry name" value="L domain-like"/>
    <property type="match status" value="1"/>
</dbReference>
<dbReference type="PROSITE" id="PS51450">
    <property type="entry name" value="LRR"/>
    <property type="match status" value="9"/>
</dbReference>
<dbReference type="PROSITE" id="PS52053">
    <property type="entry name" value="NEL"/>
    <property type="match status" value="1"/>
</dbReference>
<organism>
    <name type="scientific">Salmonella typhimurium (strain 14028s / SGSC 2262)</name>
    <dbReference type="NCBI Taxonomy" id="588858"/>
    <lineage>
        <taxon>Bacteria</taxon>
        <taxon>Pseudomonadati</taxon>
        <taxon>Pseudomonadota</taxon>
        <taxon>Gammaproteobacteria</taxon>
        <taxon>Enterobacterales</taxon>
        <taxon>Enterobacteriaceae</taxon>
        <taxon>Salmonella</taxon>
    </lineage>
</organism>
<keyword id="KW-0002">3D-structure</keyword>
<keyword id="KW-1035">Host cytoplasm</keyword>
<keyword id="KW-0433">Leucine-rich repeat</keyword>
<keyword id="KW-0677">Repeat</keyword>
<keyword id="KW-0964">Secreted</keyword>
<keyword id="KW-0808">Transferase</keyword>
<keyword id="KW-0832">Ubl conjugation</keyword>
<keyword id="KW-0833">Ubl conjugation pathway</keyword>
<keyword id="KW-0843">Virulence</keyword>
<evidence type="ECO:0000250" key="1"/>
<evidence type="ECO:0000255" key="2">
    <source>
        <dbReference type="PROSITE-ProRule" id="PRU01398"/>
    </source>
</evidence>
<evidence type="ECO:0000305" key="3"/>
<evidence type="ECO:0007829" key="4">
    <source>
        <dbReference type="PDB" id="4PUF"/>
    </source>
</evidence>
<comment type="function">
    <text evidence="1">Effector proteins function to alter host cell physiology and promote bacterial survival in host tissues. This protein is an E3 ubiquitin ligase that interferes with host's ubiquitination pathway. Can ubiquitinate both ubiquitin and host TXN (thioredoxin). Leads to significant decrease of thioredoxin activity and increase of host cell death.</text>
</comment>
<comment type="catalytic activity">
    <reaction>
        <text>S-ubiquitinyl-[E2 ubiquitin-conjugating enzyme]-L-cysteine + [acceptor protein]-L-lysine = [E2 ubiquitin-conjugating enzyme]-L-cysteine + N(6)-ubiquitinyl-[acceptor protein]-L-lysine.</text>
        <dbReference type="EC" id="2.3.2.27"/>
    </reaction>
</comment>
<comment type="subunit">
    <text evidence="1">Interacts with host TXN.</text>
</comment>
<comment type="interaction">
    <interactant intactId="EBI-10762386">
        <id>D0ZRB2</id>
    </interactant>
    <interactant intactId="EBI-594644">
        <id>P10599</id>
        <label>TXN</label>
    </interactant>
    <organismsDiffer>true</organismsDiffer>
    <experiments>7</experiments>
</comment>
<comment type="subcellular location">
    <subcellularLocation>
        <location>Secreted</location>
    </subcellularLocation>
    <subcellularLocation>
        <location>Host cytoplasm</location>
    </subcellularLocation>
    <text>Secreted via type III secretion systems 1 and 2 (SPI-1 and SPI-2 T3SS), and delivered into the host cytoplasm.</text>
</comment>
<comment type="domain">
    <text evidence="1">The LRR (leucine-rich repeat) domain forms a slightly curved solenoid and may mediate interaction with target proteins.</text>
</comment>
<comment type="PTM">
    <text evidence="1">Ubiquitinated in the presence of host E1 ubiquitin-activating enzyme, E2 ubiquitin-conjugating enzyme and ubiquitin.</text>
</comment>
<comment type="similarity">
    <text evidence="2 3">Belongs to the LRR-containing bacterial E3 ligase family.</text>
</comment>